<organism>
    <name type="scientific">Escherichia coli (strain K12 / DH10B)</name>
    <dbReference type="NCBI Taxonomy" id="316385"/>
    <lineage>
        <taxon>Bacteria</taxon>
        <taxon>Pseudomonadati</taxon>
        <taxon>Pseudomonadota</taxon>
        <taxon>Gammaproteobacteria</taxon>
        <taxon>Enterobacterales</taxon>
        <taxon>Enterobacteriaceae</taxon>
        <taxon>Escherichia</taxon>
    </lineage>
</organism>
<gene>
    <name evidence="1" type="primary">rsxD</name>
    <name type="ordered locus">ECDH10B_1764</name>
</gene>
<protein>
    <recommendedName>
        <fullName evidence="1">Ion-translocating oxidoreductase complex subunit D</fullName>
        <ecNumber evidence="1">7.-.-.-</ecNumber>
    </recommendedName>
    <alternativeName>
        <fullName evidence="1">Rsx electron transport complex subunit D</fullName>
    </alternativeName>
</protein>
<reference key="1">
    <citation type="journal article" date="2008" name="J. Bacteriol.">
        <title>The complete genome sequence of Escherichia coli DH10B: insights into the biology of a laboratory workhorse.</title>
        <authorList>
            <person name="Durfee T."/>
            <person name="Nelson R."/>
            <person name="Baldwin S."/>
            <person name="Plunkett G. III"/>
            <person name="Burland V."/>
            <person name="Mau B."/>
            <person name="Petrosino J.F."/>
            <person name="Qin X."/>
            <person name="Muzny D.M."/>
            <person name="Ayele M."/>
            <person name="Gibbs R.A."/>
            <person name="Csorgo B."/>
            <person name="Posfai G."/>
            <person name="Weinstock G.M."/>
            <person name="Blattner F.R."/>
        </authorList>
    </citation>
    <scope>NUCLEOTIDE SEQUENCE [LARGE SCALE GENOMIC DNA]</scope>
    <source>
        <strain>K12 / DH10B</strain>
    </source>
</reference>
<name>RSXD_ECODH</name>
<keyword id="KW-0997">Cell inner membrane</keyword>
<keyword id="KW-1003">Cell membrane</keyword>
<keyword id="KW-0249">Electron transport</keyword>
<keyword id="KW-0285">Flavoprotein</keyword>
<keyword id="KW-0288">FMN</keyword>
<keyword id="KW-0472">Membrane</keyword>
<keyword id="KW-0597">Phosphoprotein</keyword>
<keyword id="KW-1278">Translocase</keyword>
<keyword id="KW-0812">Transmembrane</keyword>
<keyword id="KW-1133">Transmembrane helix</keyword>
<keyword id="KW-0813">Transport</keyword>
<sequence>MVFRIASSPYTHNQRQTSRIMLLVLLAAVPGIAAQLWFFGWGTLVQILLASVSALLAEALVLKLRKQSVAATLKDNSALLTGLLLAVSIPPLAPWWMVVLGTVFAVIIAKQLYGGLGQNPFNPAMIGYVVLLISFPVQMTSWLPPHEIAVNIPGFIDAIQVIFSGHTASGGDMNTLRLGIDGISQATPLDTFKTSVRAGHSVEQIMQYPIYSGILAGAGWQWVNLAWLAGGVWLLWQKAIRWHIPLSFLVTLALCAMLGWLFSPETLAAPQIHLLSGATMLGAFFILTDPVTASTTNRGRLIFGALAGLLVWLIRSFGGYPDGVAFAVLLANITVPLIDYYTRPRVYGHRKG</sequence>
<evidence type="ECO:0000255" key="1">
    <source>
        <dbReference type="HAMAP-Rule" id="MF_00462"/>
    </source>
</evidence>
<dbReference type="EC" id="7.-.-.-" evidence="1"/>
<dbReference type="EMBL" id="CP000948">
    <property type="protein sequence ID" value="ACB02836.1"/>
    <property type="molecule type" value="Genomic_DNA"/>
</dbReference>
<dbReference type="RefSeq" id="WP_000231927.1">
    <property type="nucleotide sequence ID" value="NC_010473.1"/>
</dbReference>
<dbReference type="SMR" id="B1XFU2"/>
<dbReference type="KEGG" id="ecd:ECDH10B_1764"/>
<dbReference type="HOGENOM" id="CLU_042020_0_0_6"/>
<dbReference type="GO" id="GO:0005886">
    <property type="term" value="C:plasma membrane"/>
    <property type="evidence" value="ECO:0007669"/>
    <property type="project" value="UniProtKB-SubCell"/>
</dbReference>
<dbReference type="GO" id="GO:0022900">
    <property type="term" value="P:electron transport chain"/>
    <property type="evidence" value="ECO:0007669"/>
    <property type="project" value="UniProtKB-UniRule"/>
</dbReference>
<dbReference type="GO" id="GO:0055085">
    <property type="term" value="P:transmembrane transport"/>
    <property type="evidence" value="ECO:0007669"/>
    <property type="project" value="InterPro"/>
</dbReference>
<dbReference type="HAMAP" id="MF_00462">
    <property type="entry name" value="RsxD_RnfD"/>
    <property type="match status" value="1"/>
</dbReference>
<dbReference type="InterPro" id="IPR004338">
    <property type="entry name" value="NqrB/RnfD"/>
</dbReference>
<dbReference type="InterPro" id="IPR011303">
    <property type="entry name" value="RnfD_bac"/>
</dbReference>
<dbReference type="NCBIfam" id="NF002011">
    <property type="entry name" value="PRK00816.1"/>
    <property type="match status" value="1"/>
</dbReference>
<dbReference type="NCBIfam" id="TIGR01946">
    <property type="entry name" value="rnfD"/>
    <property type="match status" value="1"/>
</dbReference>
<dbReference type="PANTHER" id="PTHR30578">
    <property type="entry name" value="ELECTRON TRANSPORT COMPLEX PROTEIN RNFD"/>
    <property type="match status" value="1"/>
</dbReference>
<dbReference type="PANTHER" id="PTHR30578:SF0">
    <property type="entry name" value="ION-TRANSLOCATING OXIDOREDUCTASE COMPLEX SUBUNIT D"/>
    <property type="match status" value="1"/>
</dbReference>
<dbReference type="Pfam" id="PF03116">
    <property type="entry name" value="NQR2_RnfD_RnfE"/>
    <property type="match status" value="1"/>
</dbReference>
<accession>B1XFU2</accession>
<comment type="function">
    <text evidence="1">Part of a membrane-bound complex that couples electron transfer with translocation of ions across the membrane. Required to maintain the reduced state of SoxR.</text>
</comment>
<comment type="cofactor">
    <cofactor evidence="1">
        <name>FMN</name>
        <dbReference type="ChEBI" id="CHEBI:58210"/>
    </cofactor>
</comment>
<comment type="subunit">
    <text evidence="1">The complex is composed of six subunits: RsxA, RsxB, RsxC, RsxD, RsxE and RsxG.</text>
</comment>
<comment type="subcellular location">
    <subcellularLocation>
        <location evidence="1">Cell inner membrane</location>
        <topology evidence="1">Multi-pass membrane protein</topology>
    </subcellularLocation>
</comment>
<comment type="similarity">
    <text evidence="1">Belongs to the NqrB/RnfD family.</text>
</comment>
<proteinExistence type="inferred from homology"/>
<feature type="chain" id="PRO_1000191671" description="Ion-translocating oxidoreductase complex subunit D">
    <location>
        <begin position="1"/>
        <end position="352"/>
    </location>
</feature>
<feature type="transmembrane region" description="Helical" evidence="1">
    <location>
        <begin position="20"/>
        <end position="40"/>
    </location>
</feature>
<feature type="transmembrane region" description="Helical" evidence="1">
    <location>
        <begin position="42"/>
        <end position="62"/>
    </location>
</feature>
<feature type="transmembrane region" description="Helical" evidence="1">
    <location>
        <begin position="78"/>
        <end position="109"/>
    </location>
</feature>
<feature type="transmembrane region" description="Helical" evidence="1">
    <location>
        <begin position="123"/>
        <end position="143"/>
    </location>
</feature>
<feature type="transmembrane region" description="Helical" evidence="1">
    <location>
        <begin position="148"/>
        <end position="168"/>
    </location>
</feature>
<feature type="transmembrane region" description="Helical" evidence="1">
    <location>
        <begin position="214"/>
        <end position="234"/>
    </location>
</feature>
<feature type="transmembrane region" description="Helical" evidence="1">
    <location>
        <begin position="242"/>
        <end position="262"/>
    </location>
</feature>
<feature type="transmembrane region" description="Helical" evidence="1">
    <location>
        <begin position="267"/>
        <end position="287"/>
    </location>
</feature>
<feature type="transmembrane region" description="Helical" evidence="1">
    <location>
        <begin position="301"/>
        <end position="321"/>
    </location>
</feature>
<feature type="transmembrane region" description="Helical" evidence="1">
    <location>
        <begin position="322"/>
        <end position="342"/>
    </location>
</feature>
<feature type="modified residue" description="FMN phosphoryl threonine" evidence="1">
    <location>
        <position position="187"/>
    </location>
</feature>